<keyword id="KW-0012">Acyltransferase</keyword>
<keyword id="KW-0963">Cytoplasm</keyword>
<keyword id="KW-0275">Fatty acid biosynthesis</keyword>
<keyword id="KW-0276">Fatty acid metabolism</keyword>
<keyword id="KW-0444">Lipid biosynthesis</keyword>
<keyword id="KW-0443">Lipid metabolism</keyword>
<keyword id="KW-0511">Multifunctional enzyme</keyword>
<keyword id="KW-0808">Transferase</keyword>
<proteinExistence type="inferred from homology"/>
<accession>C0RIB3</accession>
<name>FABH_BRUMB</name>
<protein>
    <recommendedName>
        <fullName evidence="1">Beta-ketoacyl-[acyl-carrier-protein] synthase III</fullName>
        <shortName evidence="1">Beta-ketoacyl-ACP synthase III</shortName>
        <shortName evidence="1">KAS III</shortName>
        <ecNumber evidence="1">2.3.1.180</ecNumber>
    </recommendedName>
    <alternativeName>
        <fullName evidence="1">3-oxoacyl-[acyl-carrier-protein] synthase 3</fullName>
    </alternativeName>
    <alternativeName>
        <fullName evidence="1">3-oxoacyl-[acyl-carrier-protein] synthase III</fullName>
    </alternativeName>
</protein>
<sequence length="323" mass="34462">MIRSVVRGIGSALPKRVMKNTDFEGIIETSDEWIVQRTGIRERHIAGEGETTVSLGAAAARAAIENAGLQPSDIDLVLLATSTPNNTFPASAVAIQRELGITRGFAFDLQAVCSGFIYAITTADLYIRGGMARRVLVIGAETFSRILDWTDRTTCVLFGDGAGAIVLEAAEGHGLTSDRGILAANLRSDGNHKEKLYVDGGPSTTQTVGHLRMEGREVFKHAVGMITDVIEASFEATGLTAEDIDWFVPHQANKRIIDASAKKLHIAEEKVVITVDRHGNTSAASVPLALATAVADGRIKKGDLVLLEAMGGGFTWGAVLVRW</sequence>
<dbReference type="EC" id="2.3.1.180" evidence="1"/>
<dbReference type="EMBL" id="CP001488">
    <property type="protein sequence ID" value="ACO00571.1"/>
    <property type="molecule type" value="Genomic_DNA"/>
</dbReference>
<dbReference type="RefSeq" id="WP_004686490.1">
    <property type="nucleotide sequence ID" value="NC_012441.1"/>
</dbReference>
<dbReference type="SMR" id="C0RIB3"/>
<dbReference type="KEGG" id="bmi:BMEA_A0815"/>
<dbReference type="HOGENOM" id="CLU_039592_3_1_5"/>
<dbReference type="UniPathway" id="UPA00094"/>
<dbReference type="Proteomes" id="UP000001748">
    <property type="component" value="Chromosome I"/>
</dbReference>
<dbReference type="GO" id="GO:0005737">
    <property type="term" value="C:cytoplasm"/>
    <property type="evidence" value="ECO:0007669"/>
    <property type="project" value="UniProtKB-SubCell"/>
</dbReference>
<dbReference type="GO" id="GO:0004315">
    <property type="term" value="F:3-oxoacyl-[acyl-carrier-protein] synthase activity"/>
    <property type="evidence" value="ECO:0007669"/>
    <property type="project" value="InterPro"/>
</dbReference>
<dbReference type="GO" id="GO:0033818">
    <property type="term" value="F:beta-ketoacyl-acyl-carrier-protein synthase III activity"/>
    <property type="evidence" value="ECO:0007669"/>
    <property type="project" value="UniProtKB-UniRule"/>
</dbReference>
<dbReference type="GO" id="GO:0006633">
    <property type="term" value="P:fatty acid biosynthetic process"/>
    <property type="evidence" value="ECO:0007669"/>
    <property type="project" value="UniProtKB-UniRule"/>
</dbReference>
<dbReference type="CDD" id="cd00830">
    <property type="entry name" value="KAS_III"/>
    <property type="match status" value="1"/>
</dbReference>
<dbReference type="FunFam" id="3.40.47.10:FF:000004">
    <property type="entry name" value="3-oxoacyl-[acyl-carrier-protein] synthase 3"/>
    <property type="match status" value="1"/>
</dbReference>
<dbReference type="Gene3D" id="3.40.47.10">
    <property type="match status" value="1"/>
</dbReference>
<dbReference type="HAMAP" id="MF_01815">
    <property type="entry name" value="FabH"/>
    <property type="match status" value="1"/>
</dbReference>
<dbReference type="InterPro" id="IPR013747">
    <property type="entry name" value="ACP_syn_III_C"/>
</dbReference>
<dbReference type="InterPro" id="IPR013751">
    <property type="entry name" value="ACP_syn_III_N"/>
</dbReference>
<dbReference type="InterPro" id="IPR004655">
    <property type="entry name" value="FabH"/>
</dbReference>
<dbReference type="InterPro" id="IPR016039">
    <property type="entry name" value="Thiolase-like"/>
</dbReference>
<dbReference type="NCBIfam" id="TIGR00747">
    <property type="entry name" value="fabH"/>
    <property type="match status" value="1"/>
</dbReference>
<dbReference type="NCBIfam" id="NF006829">
    <property type="entry name" value="PRK09352.1"/>
    <property type="match status" value="1"/>
</dbReference>
<dbReference type="PANTHER" id="PTHR43091">
    <property type="entry name" value="3-OXOACYL-[ACYL-CARRIER-PROTEIN] SYNTHASE"/>
    <property type="match status" value="1"/>
</dbReference>
<dbReference type="PANTHER" id="PTHR43091:SF1">
    <property type="entry name" value="BETA-KETOACYL-[ACYL-CARRIER-PROTEIN] SYNTHASE III, CHLOROPLASTIC"/>
    <property type="match status" value="1"/>
</dbReference>
<dbReference type="Pfam" id="PF08545">
    <property type="entry name" value="ACP_syn_III"/>
    <property type="match status" value="1"/>
</dbReference>
<dbReference type="Pfam" id="PF08541">
    <property type="entry name" value="ACP_syn_III_C"/>
    <property type="match status" value="1"/>
</dbReference>
<dbReference type="SUPFAM" id="SSF53901">
    <property type="entry name" value="Thiolase-like"/>
    <property type="match status" value="1"/>
</dbReference>
<feature type="chain" id="PRO_1000187850" description="Beta-ketoacyl-[acyl-carrier-protein] synthase III">
    <location>
        <begin position="1"/>
        <end position="323"/>
    </location>
</feature>
<feature type="region of interest" description="ACP-binding" evidence="1">
    <location>
        <begin position="251"/>
        <end position="255"/>
    </location>
</feature>
<feature type="active site" evidence="1">
    <location>
        <position position="113"/>
    </location>
</feature>
<feature type="active site" evidence="1">
    <location>
        <position position="250"/>
    </location>
</feature>
<feature type="active site" evidence="1">
    <location>
        <position position="280"/>
    </location>
</feature>
<comment type="function">
    <text evidence="1">Catalyzes the condensation reaction of fatty acid synthesis by the addition to an acyl acceptor of two carbons from malonyl-ACP. Catalyzes the first condensation reaction which initiates fatty acid synthesis and may therefore play a role in governing the total rate of fatty acid production. Possesses both acetoacetyl-ACP synthase and acetyl transacylase activities. Its substrate specificity determines the biosynthesis of branched-chain and/or straight-chain of fatty acids.</text>
</comment>
<comment type="catalytic activity">
    <reaction evidence="1">
        <text>malonyl-[ACP] + acetyl-CoA + H(+) = 3-oxobutanoyl-[ACP] + CO2 + CoA</text>
        <dbReference type="Rhea" id="RHEA:12080"/>
        <dbReference type="Rhea" id="RHEA-COMP:9623"/>
        <dbReference type="Rhea" id="RHEA-COMP:9625"/>
        <dbReference type="ChEBI" id="CHEBI:15378"/>
        <dbReference type="ChEBI" id="CHEBI:16526"/>
        <dbReference type="ChEBI" id="CHEBI:57287"/>
        <dbReference type="ChEBI" id="CHEBI:57288"/>
        <dbReference type="ChEBI" id="CHEBI:78449"/>
        <dbReference type="ChEBI" id="CHEBI:78450"/>
        <dbReference type="EC" id="2.3.1.180"/>
    </reaction>
</comment>
<comment type="pathway">
    <text evidence="1">Lipid metabolism; fatty acid biosynthesis.</text>
</comment>
<comment type="subunit">
    <text evidence="1">Homodimer.</text>
</comment>
<comment type="subcellular location">
    <subcellularLocation>
        <location evidence="1">Cytoplasm</location>
    </subcellularLocation>
</comment>
<comment type="domain">
    <text evidence="1">The last Arg residue of the ACP-binding site is essential for the weak association between ACP/AcpP and FabH.</text>
</comment>
<comment type="similarity">
    <text evidence="1">Belongs to the thiolase-like superfamily. FabH family.</text>
</comment>
<gene>
    <name evidence="1" type="primary">fabH</name>
    <name type="ordered locus">BMEA_A0815</name>
</gene>
<evidence type="ECO:0000255" key="1">
    <source>
        <dbReference type="HAMAP-Rule" id="MF_01815"/>
    </source>
</evidence>
<organism>
    <name type="scientific">Brucella melitensis biotype 2 (strain ATCC 23457)</name>
    <dbReference type="NCBI Taxonomy" id="546272"/>
    <lineage>
        <taxon>Bacteria</taxon>
        <taxon>Pseudomonadati</taxon>
        <taxon>Pseudomonadota</taxon>
        <taxon>Alphaproteobacteria</taxon>
        <taxon>Hyphomicrobiales</taxon>
        <taxon>Brucellaceae</taxon>
        <taxon>Brucella/Ochrobactrum group</taxon>
        <taxon>Brucella</taxon>
    </lineage>
</organism>
<reference key="1">
    <citation type="submission" date="2009-03" db="EMBL/GenBank/DDBJ databases">
        <title>Brucella melitensis ATCC 23457 whole genome shotgun sequencing project.</title>
        <authorList>
            <person name="Setubal J.C."/>
            <person name="Boyle S."/>
            <person name="Crasta O.R."/>
            <person name="Gillespie J.J."/>
            <person name="Kenyon R.W."/>
            <person name="Lu J."/>
            <person name="Mane S."/>
            <person name="Nagrani S."/>
            <person name="Shallom J.M."/>
            <person name="Shallom S."/>
            <person name="Shukla M."/>
            <person name="Snyder E.E."/>
            <person name="Sobral B.W."/>
            <person name="Wattam A.R."/>
            <person name="Will R."/>
            <person name="Williams K."/>
            <person name="Yoo H."/>
            <person name="Munk C."/>
            <person name="Tapia R."/>
            <person name="Han C."/>
            <person name="Detter J.C."/>
            <person name="Bruce D."/>
            <person name="Brettin T.S."/>
        </authorList>
    </citation>
    <scope>NUCLEOTIDE SEQUENCE [LARGE SCALE GENOMIC DNA]</scope>
    <source>
        <strain>ATCC 23457</strain>
    </source>
</reference>